<reference key="1">
    <citation type="journal article" date="2002" name="Nature">
        <title>Comparison of the genomes of two Xanthomonas pathogens with differing host specificities.</title>
        <authorList>
            <person name="da Silva A.C.R."/>
            <person name="Ferro J.A."/>
            <person name="Reinach F.C."/>
            <person name="Farah C.S."/>
            <person name="Furlan L.R."/>
            <person name="Quaggio R.B."/>
            <person name="Monteiro-Vitorello C.B."/>
            <person name="Van Sluys M.A."/>
            <person name="Almeida N.F. Jr."/>
            <person name="Alves L.M.C."/>
            <person name="do Amaral A.M."/>
            <person name="Bertolini M.C."/>
            <person name="Camargo L.E.A."/>
            <person name="Camarotte G."/>
            <person name="Cannavan F."/>
            <person name="Cardozo J."/>
            <person name="Chambergo F."/>
            <person name="Ciapina L.P."/>
            <person name="Cicarelli R.M.B."/>
            <person name="Coutinho L.L."/>
            <person name="Cursino-Santos J.R."/>
            <person name="El-Dorry H."/>
            <person name="Faria J.B."/>
            <person name="Ferreira A.J.S."/>
            <person name="Ferreira R.C.C."/>
            <person name="Ferro M.I.T."/>
            <person name="Formighieri E.F."/>
            <person name="Franco M.C."/>
            <person name="Greggio C.C."/>
            <person name="Gruber A."/>
            <person name="Katsuyama A.M."/>
            <person name="Kishi L.T."/>
            <person name="Leite R.P."/>
            <person name="Lemos E.G.M."/>
            <person name="Lemos M.V.F."/>
            <person name="Locali E.C."/>
            <person name="Machado M.A."/>
            <person name="Madeira A.M.B.N."/>
            <person name="Martinez-Rossi N.M."/>
            <person name="Martins E.C."/>
            <person name="Meidanis J."/>
            <person name="Menck C.F.M."/>
            <person name="Miyaki C.Y."/>
            <person name="Moon D.H."/>
            <person name="Moreira L.M."/>
            <person name="Novo M.T.M."/>
            <person name="Okura V.K."/>
            <person name="Oliveira M.C."/>
            <person name="Oliveira V.R."/>
            <person name="Pereira H.A."/>
            <person name="Rossi A."/>
            <person name="Sena J.A.D."/>
            <person name="Silva C."/>
            <person name="de Souza R.F."/>
            <person name="Spinola L.A.F."/>
            <person name="Takita M.A."/>
            <person name="Tamura R.E."/>
            <person name="Teixeira E.C."/>
            <person name="Tezza R.I.D."/>
            <person name="Trindade dos Santos M."/>
            <person name="Truffi D."/>
            <person name="Tsai S.M."/>
            <person name="White F.F."/>
            <person name="Setubal J.C."/>
            <person name="Kitajima J.P."/>
        </authorList>
    </citation>
    <scope>NUCLEOTIDE SEQUENCE [LARGE SCALE GENOMIC DNA]</scope>
    <source>
        <strain>306</strain>
    </source>
</reference>
<sequence length="490" mass="51181">MALQFTLNQDAPASAAVDCIVVGVFADKTLSPAAQALDSASQGRLTALVARGDVASKTGSTTLLHDLPGVTAPRVLVVGLGEAGKFGVAPYLKAVGDATRALKTGAVGTALLTLTELTVKARDAAWNIRQAVTVSDHAAYRYTATLGKKKVDETGLTTLAIAGDDARALAVGVATAEGVEFARELGNLPPNYCTPAYLADTAAAFAGKFRGAEAEILDEAQMEALGMGSLLSVARGSANRPRLIVLKWNGGGDARPYVLVGKGITFDTGGVNLKTQGGIEEMKYDMCGGANVIGTFVATVKAELPINLVVVVPAVENAIDGNAYRPSDVITSMSGKTIEVGNTDAEGRLILCDALTYAERFNPEALVDVATLTGACMVALGHQTAGLMSKHDDLANELLAAGEHVFDRAWRLPLWDEYQGLLDSTFADVYNIGGRWGGAITAGCFLSRFTENQRWAHLDIAGVASDEGKRGMATGRPVGLLTQWLLDRAA</sequence>
<feature type="chain" id="PRO_0000165816" description="Probable cytosol aminopeptidase">
    <location>
        <begin position="1"/>
        <end position="490"/>
    </location>
</feature>
<feature type="active site" evidence="1">
    <location>
        <position position="274"/>
    </location>
</feature>
<feature type="active site" evidence="1">
    <location>
        <position position="348"/>
    </location>
</feature>
<feature type="binding site" evidence="1">
    <location>
        <position position="262"/>
    </location>
    <ligand>
        <name>Mn(2+)</name>
        <dbReference type="ChEBI" id="CHEBI:29035"/>
        <label>2</label>
    </ligand>
</feature>
<feature type="binding site" evidence="1">
    <location>
        <position position="267"/>
    </location>
    <ligand>
        <name>Mn(2+)</name>
        <dbReference type="ChEBI" id="CHEBI:29035"/>
        <label>1</label>
    </ligand>
</feature>
<feature type="binding site" evidence="1">
    <location>
        <position position="267"/>
    </location>
    <ligand>
        <name>Mn(2+)</name>
        <dbReference type="ChEBI" id="CHEBI:29035"/>
        <label>2</label>
    </ligand>
</feature>
<feature type="binding site" evidence="1">
    <location>
        <position position="285"/>
    </location>
    <ligand>
        <name>Mn(2+)</name>
        <dbReference type="ChEBI" id="CHEBI:29035"/>
        <label>2</label>
    </ligand>
</feature>
<feature type="binding site" evidence="1">
    <location>
        <position position="344"/>
    </location>
    <ligand>
        <name>Mn(2+)</name>
        <dbReference type="ChEBI" id="CHEBI:29035"/>
        <label>1</label>
    </ligand>
</feature>
<feature type="binding site" evidence="1">
    <location>
        <position position="346"/>
    </location>
    <ligand>
        <name>Mn(2+)</name>
        <dbReference type="ChEBI" id="CHEBI:29035"/>
        <label>1</label>
    </ligand>
</feature>
<feature type="binding site" evidence="1">
    <location>
        <position position="346"/>
    </location>
    <ligand>
        <name>Mn(2+)</name>
        <dbReference type="ChEBI" id="CHEBI:29035"/>
        <label>2</label>
    </ligand>
</feature>
<accession>Q8PGR0</accession>
<proteinExistence type="inferred from homology"/>
<comment type="function">
    <text evidence="1">Presumably involved in the processing and regular turnover of intracellular proteins. Catalyzes the removal of unsubstituted N-terminal amino acids from various peptides.</text>
</comment>
<comment type="catalytic activity">
    <reaction evidence="1">
        <text>Release of an N-terminal amino acid, Xaa-|-Yaa-, in which Xaa is preferably Leu, but may be other amino acids including Pro although not Arg or Lys, and Yaa may be Pro. Amino acid amides and methyl esters are also readily hydrolyzed, but rates on arylamides are exceedingly low.</text>
        <dbReference type="EC" id="3.4.11.1"/>
    </reaction>
</comment>
<comment type="catalytic activity">
    <reaction evidence="1">
        <text>Release of an N-terminal amino acid, preferentially leucine, but not glutamic or aspartic acids.</text>
        <dbReference type="EC" id="3.4.11.10"/>
    </reaction>
</comment>
<comment type="cofactor">
    <cofactor evidence="1">
        <name>Mn(2+)</name>
        <dbReference type="ChEBI" id="CHEBI:29035"/>
    </cofactor>
    <text evidence="1">Binds 2 manganese ions per subunit.</text>
</comment>
<comment type="subcellular location">
    <subcellularLocation>
        <location evidence="1">Cytoplasm</location>
    </subcellularLocation>
</comment>
<comment type="similarity">
    <text evidence="1">Belongs to the peptidase M17 family.</text>
</comment>
<dbReference type="EC" id="3.4.11.1" evidence="1"/>
<dbReference type="EC" id="3.4.11.10" evidence="1"/>
<dbReference type="EMBL" id="AE008923">
    <property type="protein sequence ID" value="AAM38399.1"/>
    <property type="molecule type" value="Genomic_DNA"/>
</dbReference>
<dbReference type="RefSeq" id="WP_003490206.1">
    <property type="nucleotide sequence ID" value="NC_003919.1"/>
</dbReference>
<dbReference type="SMR" id="Q8PGR0"/>
<dbReference type="MEROPS" id="M17.003"/>
<dbReference type="KEGG" id="xac:XAC3556"/>
<dbReference type="eggNOG" id="COG0260">
    <property type="taxonomic scope" value="Bacteria"/>
</dbReference>
<dbReference type="HOGENOM" id="CLU_013734_2_2_6"/>
<dbReference type="Proteomes" id="UP000000576">
    <property type="component" value="Chromosome"/>
</dbReference>
<dbReference type="GO" id="GO:0005737">
    <property type="term" value="C:cytoplasm"/>
    <property type="evidence" value="ECO:0007669"/>
    <property type="project" value="UniProtKB-SubCell"/>
</dbReference>
<dbReference type="GO" id="GO:0030145">
    <property type="term" value="F:manganese ion binding"/>
    <property type="evidence" value="ECO:0007669"/>
    <property type="project" value="UniProtKB-UniRule"/>
</dbReference>
<dbReference type="GO" id="GO:0070006">
    <property type="term" value="F:metalloaminopeptidase activity"/>
    <property type="evidence" value="ECO:0007669"/>
    <property type="project" value="InterPro"/>
</dbReference>
<dbReference type="GO" id="GO:0006508">
    <property type="term" value="P:proteolysis"/>
    <property type="evidence" value="ECO:0007669"/>
    <property type="project" value="UniProtKB-KW"/>
</dbReference>
<dbReference type="CDD" id="cd00433">
    <property type="entry name" value="Peptidase_M17"/>
    <property type="match status" value="1"/>
</dbReference>
<dbReference type="Gene3D" id="3.40.220.10">
    <property type="entry name" value="Leucine Aminopeptidase, subunit E, domain 1"/>
    <property type="match status" value="1"/>
</dbReference>
<dbReference type="Gene3D" id="3.40.630.10">
    <property type="entry name" value="Zn peptidases"/>
    <property type="match status" value="1"/>
</dbReference>
<dbReference type="HAMAP" id="MF_00181">
    <property type="entry name" value="Cytosol_peptidase_M17"/>
    <property type="match status" value="1"/>
</dbReference>
<dbReference type="InterPro" id="IPR011356">
    <property type="entry name" value="Leucine_aapep/pepB"/>
</dbReference>
<dbReference type="InterPro" id="IPR043472">
    <property type="entry name" value="Macro_dom-like"/>
</dbReference>
<dbReference type="InterPro" id="IPR000819">
    <property type="entry name" value="Peptidase_M17_C"/>
</dbReference>
<dbReference type="InterPro" id="IPR023042">
    <property type="entry name" value="Peptidase_M17_leu_NH2_pept"/>
</dbReference>
<dbReference type="InterPro" id="IPR008283">
    <property type="entry name" value="Peptidase_M17_N"/>
</dbReference>
<dbReference type="NCBIfam" id="NF002074">
    <property type="entry name" value="PRK00913.1-4"/>
    <property type="match status" value="1"/>
</dbReference>
<dbReference type="PANTHER" id="PTHR11963:SF23">
    <property type="entry name" value="CYTOSOL AMINOPEPTIDASE"/>
    <property type="match status" value="1"/>
</dbReference>
<dbReference type="PANTHER" id="PTHR11963">
    <property type="entry name" value="LEUCINE AMINOPEPTIDASE-RELATED"/>
    <property type="match status" value="1"/>
</dbReference>
<dbReference type="Pfam" id="PF00883">
    <property type="entry name" value="Peptidase_M17"/>
    <property type="match status" value="1"/>
</dbReference>
<dbReference type="Pfam" id="PF02789">
    <property type="entry name" value="Peptidase_M17_N"/>
    <property type="match status" value="1"/>
</dbReference>
<dbReference type="PRINTS" id="PR00481">
    <property type="entry name" value="LAMNOPPTDASE"/>
</dbReference>
<dbReference type="SUPFAM" id="SSF52949">
    <property type="entry name" value="Macro domain-like"/>
    <property type="match status" value="1"/>
</dbReference>
<dbReference type="SUPFAM" id="SSF53187">
    <property type="entry name" value="Zn-dependent exopeptidases"/>
    <property type="match status" value="1"/>
</dbReference>
<dbReference type="PROSITE" id="PS00631">
    <property type="entry name" value="CYTOSOL_AP"/>
    <property type="match status" value="1"/>
</dbReference>
<gene>
    <name evidence="1" type="primary">pepA</name>
    <name type="ordered locus">XAC3556</name>
</gene>
<protein>
    <recommendedName>
        <fullName evidence="1">Probable cytosol aminopeptidase</fullName>
        <ecNumber evidence="1">3.4.11.1</ecNumber>
    </recommendedName>
    <alternativeName>
        <fullName evidence="1">Leucine aminopeptidase</fullName>
        <shortName evidence="1">LAP</shortName>
        <ecNumber evidence="1">3.4.11.10</ecNumber>
    </alternativeName>
    <alternativeName>
        <fullName evidence="1">Leucyl aminopeptidase</fullName>
    </alternativeName>
</protein>
<keyword id="KW-0031">Aminopeptidase</keyword>
<keyword id="KW-0963">Cytoplasm</keyword>
<keyword id="KW-0378">Hydrolase</keyword>
<keyword id="KW-0464">Manganese</keyword>
<keyword id="KW-0479">Metal-binding</keyword>
<keyword id="KW-0645">Protease</keyword>
<name>AMPA_XANAC</name>
<organism>
    <name type="scientific">Xanthomonas axonopodis pv. citri (strain 306)</name>
    <dbReference type="NCBI Taxonomy" id="190486"/>
    <lineage>
        <taxon>Bacteria</taxon>
        <taxon>Pseudomonadati</taxon>
        <taxon>Pseudomonadota</taxon>
        <taxon>Gammaproteobacteria</taxon>
        <taxon>Lysobacterales</taxon>
        <taxon>Lysobacteraceae</taxon>
        <taxon>Xanthomonas</taxon>
    </lineage>
</organism>
<evidence type="ECO:0000255" key="1">
    <source>
        <dbReference type="HAMAP-Rule" id="MF_00181"/>
    </source>
</evidence>